<reference key="1">
    <citation type="journal article" date="1998" name="Science">
        <title>Genome sequence of an obligate intracellular pathogen of humans: Chlamydia trachomatis.</title>
        <authorList>
            <person name="Stephens R.S."/>
            <person name="Kalman S."/>
            <person name="Lammel C.J."/>
            <person name="Fan J."/>
            <person name="Marathe R."/>
            <person name="Aravind L."/>
            <person name="Mitchell W.P."/>
            <person name="Olinger L."/>
            <person name="Tatusov R.L."/>
            <person name="Zhao Q."/>
            <person name="Koonin E.V."/>
            <person name="Davis R.W."/>
        </authorList>
    </citation>
    <scope>NUCLEOTIDE SEQUENCE [LARGE SCALE GENOMIC DNA]</scope>
    <source>
        <strain>ATCC VR-885 / DSM 19411 / UW-3/Cx</strain>
    </source>
</reference>
<proteinExistence type="inferred from homology"/>
<comment type="function">
    <text evidence="1">Catalyzes the formation of 4-diphosphocytidyl-2-C-methyl-D-erythritol from CTP and 2-C-methyl-D-erythritol 4-phosphate (MEP).</text>
</comment>
<comment type="catalytic activity">
    <reaction evidence="1">
        <text>2-C-methyl-D-erythritol 4-phosphate + CTP + H(+) = 4-CDP-2-C-methyl-D-erythritol + diphosphate</text>
        <dbReference type="Rhea" id="RHEA:13429"/>
        <dbReference type="ChEBI" id="CHEBI:15378"/>
        <dbReference type="ChEBI" id="CHEBI:33019"/>
        <dbReference type="ChEBI" id="CHEBI:37563"/>
        <dbReference type="ChEBI" id="CHEBI:57823"/>
        <dbReference type="ChEBI" id="CHEBI:58262"/>
        <dbReference type="EC" id="2.7.7.60"/>
    </reaction>
</comment>
<comment type="pathway">
    <text evidence="1">Isoprenoid biosynthesis; isopentenyl diphosphate biosynthesis via DXP pathway; isopentenyl diphosphate from 1-deoxy-D-xylulose 5-phosphate: step 2/6.</text>
</comment>
<comment type="similarity">
    <text evidence="1">Belongs to the IspD/TarI cytidylyltransferase family. IspD subfamily.</text>
</comment>
<dbReference type="EC" id="2.7.7.60" evidence="1"/>
<dbReference type="EMBL" id="AE001273">
    <property type="protein sequence ID" value="AAC68062.1"/>
    <property type="molecule type" value="Genomic_DNA"/>
</dbReference>
<dbReference type="PIR" id="B71511">
    <property type="entry name" value="B71511"/>
</dbReference>
<dbReference type="RefSeq" id="NP_219975.1">
    <property type="nucleotide sequence ID" value="NC_000117.1"/>
</dbReference>
<dbReference type="RefSeq" id="WP_009871820.1">
    <property type="nucleotide sequence ID" value="NC_000117.1"/>
</dbReference>
<dbReference type="SMR" id="O84468"/>
<dbReference type="FunCoup" id="O84468">
    <property type="interactions" value="192"/>
</dbReference>
<dbReference type="STRING" id="272561.CT_462"/>
<dbReference type="EnsemblBacteria" id="AAC68062">
    <property type="protein sequence ID" value="AAC68062"/>
    <property type="gene ID" value="CT_462"/>
</dbReference>
<dbReference type="GeneID" id="884238"/>
<dbReference type="KEGG" id="ctr:CT_462"/>
<dbReference type="PATRIC" id="fig|272561.5.peg.500"/>
<dbReference type="HOGENOM" id="CLU_061281_2_2_0"/>
<dbReference type="InParanoid" id="O84468"/>
<dbReference type="OrthoDB" id="9806837at2"/>
<dbReference type="UniPathway" id="UPA00056">
    <property type="reaction ID" value="UER00093"/>
</dbReference>
<dbReference type="Proteomes" id="UP000000431">
    <property type="component" value="Chromosome"/>
</dbReference>
<dbReference type="GO" id="GO:0050518">
    <property type="term" value="F:2-C-methyl-D-erythritol 4-phosphate cytidylyltransferase activity"/>
    <property type="evidence" value="ECO:0000318"/>
    <property type="project" value="GO_Central"/>
</dbReference>
<dbReference type="GO" id="GO:0019288">
    <property type="term" value="P:isopentenyl diphosphate biosynthetic process, methylerythritol 4-phosphate pathway"/>
    <property type="evidence" value="ECO:0007669"/>
    <property type="project" value="UniProtKB-UniRule"/>
</dbReference>
<dbReference type="CDD" id="cd02516">
    <property type="entry name" value="CDP-ME_synthetase"/>
    <property type="match status" value="1"/>
</dbReference>
<dbReference type="Gene3D" id="3.90.550.10">
    <property type="entry name" value="Spore Coat Polysaccharide Biosynthesis Protein SpsA, Chain A"/>
    <property type="match status" value="1"/>
</dbReference>
<dbReference type="HAMAP" id="MF_00108">
    <property type="entry name" value="IspD"/>
    <property type="match status" value="1"/>
</dbReference>
<dbReference type="InterPro" id="IPR001228">
    <property type="entry name" value="IspD"/>
</dbReference>
<dbReference type="InterPro" id="IPR034683">
    <property type="entry name" value="IspD/TarI"/>
</dbReference>
<dbReference type="InterPro" id="IPR050088">
    <property type="entry name" value="IspD/TarI_cytidylyltransf_bact"/>
</dbReference>
<dbReference type="InterPro" id="IPR018294">
    <property type="entry name" value="ISPD_synthase_CS"/>
</dbReference>
<dbReference type="InterPro" id="IPR029044">
    <property type="entry name" value="Nucleotide-diphossugar_trans"/>
</dbReference>
<dbReference type="NCBIfam" id="TIGR00453">
    <property type="entry name" value="ispD"/>
    <property type="match status" value="1"/>
</dbReference>
<dbReference type="PANTHER" id="PTHR32125">
    <property type="entry name" value="2-C-METHYL-D-ERYTHRITOL 4-PHOSPHATE CYTIDYLYLTRANSFERASE, CHLOROPLASTIC"/>
    <property type="match status" value="1"/>
</dbReference>
<dbReference type="PANTHER" id="PTHR32125:SF4">
    <property type="entry name" value="2-C-METHYL-D-ERYTHRITOL 4-PHOSPHATE CYTIDYLYLTRANSFERASE, CHLOROPLASTIC"/>
    <property type="match status" value="1"/>
</dbReference>
<dbReference type="Pfam" id="PF01128">
    <property type="entry name" value="IspD"/>
    <property type="match status" value="1"/>
</dbReference>
<dbReference type="SUPFAM" id="SSF53448">
    <property type="entry name" value="Nucleotide-diphospho-sugar transferases"/>
    <property type="match status" value="1"/>
</dbReference>
<dbReference type="PROSITE" id="PS01295">
    <property type="entry name" value="ISPD"/>
    <property type="match status" value="1"/>
</dbReference>
<feature type="chain" id="PRO_0000075563" description="2-C-methyl-D-erythritol 4-phosphate cytidylyltransferase">
    <location>
        <begin position="1"/>
        <end position="219"/>
    </location>
</feature>
<feature type="site" description="Transition state stabilizer" evidence="1">
    <location>
        <position position="17"/>
    </location>
</feature>
<feature type="site" description="Transition state stabilizer" evidence="1">
    <location>
        <position position="24"/>
    </location>
</feature>
<feature type="site" description="Positions MEP for the nucleophilic attack" evidence="1">
    <location>
        <position position="142"/>
    </location>
</feature>
<feature type="site" description="Positions MEP for the nucleophilic attack" evidence="1">
    <location>
        <position position="198"/>
    </location>
</feature>
<sequence>MNLSCSLVLLGGGKGERFNSLQPKQYTHLCGEPLILHALHAYQRLPFVQEVVVVCEEQYRELFLPYSVKFASPGTLRQDSVFSGLQQVSTPWVCIHDGVRPFVYADEVIEVCSAARKTGAAALASPATYTIKSCAPVRTLDRDALAVIHTPQCLDTEVLREGLLLARAMDFSLSDDTEAAELLGIEPTLVFSNRVQIKVTYPEDLLFAETLLSKSSTYK</sequence>
<organism>
    <name type="scientific">Chlamydia trachomatis serovar D (strain ATCC VR-885 / DSM 19411 / UW-3/Cx)</name>
    <dbReference type="NCBI Taxonomy" id="272561"/>
    <lineage>
        <taxon>Bacteria</taxon>
        <taxon>Pseudomonadati</taxon>
        <taxon>Chlamydiota</taxon>
        <taxon>Chlamydiia</taxon>
        <taxon>Chlamydiales</taxon>
        <taxon>Chlamydiaceae</taxon>
        <taxon>Chlamydia/Chlamydophila group</taxon>
        <taxon>Chlamydia</taxon>
    </lineage>
</organism>
<gene>
    <name evidence="1" type="primary">ispD</name>
    <name type="ordered locus">CT_462</name>
</gene>
<evidence type="ECO:0000255" key="1">
    <source>
        <dbReference type="HAMAP-Rule" id="MF_00108"/>
    </source>
</evidence>
<accession>O84468</accession>
<keyword id="KW-0414">Isoprene biosynthesis</keyword>
<keyword id="KW-0548">Nucleotidyltransferase</keyword>
<keyword id="KW-1185">Reference proteome</keyword>
<keyword id="KW-0808">Transferase</keyword>
<name>ISPD_CHLTR</name>
<protein>
    <recommendedName>
        <fullName evidence="1">2-C-methyl-D-erythritol 4-phosphate cytidylyltransferase</fullName>
        <ecNumber evidence="1">2.7.7.60</ecNumber>
    </recommendedName>
    <alternativeName>
        <fullName evidence="1">4-diphosphocytidyl-2C-methyl-D-erythritol synthase</fullName>
    </alternativeName>
    <alternativeName>
        <fullName evidence="1">MEP cytidylyltransferase</fullName>
        <shortName evidence="1">MCT</shortName>
    </alternativeName>
</protein>